<sequence length="288" mass="31573">MGLFDRKEKYIRINPNRYVRNGVDHHVPEVPDDLFAKCPGCKQAIYQKDLGQAKICPNCSYAFRISAKERLDLTVDEGSFQELFTGIKTENPLNFPGYMEKLAATKEKTGLDEAVVTGVATIKGQKTALAIMDSNFIMASMGTVVGEKITKLFEYAILEKLPVVIFTASGGARMQEGIMSLMQMAKISAAVKRHSNAGLLYLTVLTDPTTGGVTASFAMQGDIILAEPQTLIGFAGRRVIENTVRETLPDDFQKAEFLQEHGFVDAIVKRTELADTIATLLSFHGGVQ</sequence>
<evidence type="ECO:0000255" key="1">
    <source>
        <dbReference type="HAMAP-Rule" id="MF_01395"/>
    </source>
</evidence>
<evidence type="ECO:0000255" key="2">
    <source>
        <dbReference type="PROSITE-ProRule" id="PRU01136"/>
    </source>
</evidence>
<protein>
    <recommendedName>
        <fullName evidence="1">Acetyl-coenzyme A carboxylase carboxyl transferase subunit beta</fullName>
        <shortName evidence="1">ACCase subunit beta</shortName>
        <shortName evidence="1">Acetyl-CoA carboxylase carboxyltransferase subunit beta</shortName>
        <ecNumber evidence="1">2.1.3.15</ecNumber>
    </recommendedName>
</protein>
<accession>Q5M5R2</accession>
<comment type="function">
    <text evidence="1">Component of the acetyl coenzyme A carboxylase (ACC) complex. Biotin carboxylase (BC) catalyzes the carboxylation of biotin on its carrier protein (BCCP) and then the CO(2) group is transferred by the transcarboxylase to acetyl-CoA to form malonyl-CoA.</text>
</comment>
<comment type="catalytic activity">
    <reaction evidence="1">
        <text>N(6)-carboxybiotinyl-L-lysyl-[protein] + acetyl-CoA = N(6)-biotinyl-L-lysyl-[protein] + malonyl-CoA</text>
        <dbReference type="Rhea" id="RHEA:54728"/>
        <dbReference type="Rhea" id="RHEA-COMP:10505"/>
        <dbReference type="Rhea" id="RHEA-COMP:10506"/>
        <dbReference type="ChEBI" id="CHEBI:57288"/>
        <dbReference type="ChEBI" id="CHEBI:57384"/>
        <dbReference type="ChEBI" id="CHEBI:83144"/>
        <dbReference type="ChEBI" id="CHEBI:83145"/>
        <dbReference type="EC" id="2.1.3.15"/>
    </reaction>
</comment>
<comment type="cofactor">
    <cofactor evidence="1">
        <name>Zn(2+)</name>
        <dbReference type="ChEBI" id="CHEBI:29105"/>
    </cofactor>
    <text evidence="1">Binds 1 zinc ion per subunit.</text>
</comment>
<comment type="pathway">
    <text evidence="1">Lipid metabolism; malonyl-CoA biosynthesis; malonyl-CoA from acetyl-CoA: step 1/1.</text>
</comment>
<comment type="subunit">
    <text evidence="1">Acetyl-CoA carboxylase is a heterohexamer composed of biotin carboxyl carrier protein (AccB), biotin carboxylase (AccC) and two subunits each of ACCase subunit alpha (AccA) and ACCase subunit beta (AccD).</text>
</comment>
<comment type="subcellular location">
    <subcellularLocation>
        <location evidence="1">Cytoplasm</location>
    </subcellularLocation>
</comment>
<comment type="similarity">
    <text evidence="1">Belongs to the AccD/PCCB family.</text>
</comment>
<reference key="1">
    <citation type="journal article" date="2004" name="Nat. Biotechnol.">
        <title>Complete sequence and comparative genome analysis of the dairy bacterium Streptococcus thermophilus.</title>
        <authorList>
            <person name="Bolotin A."/>
            <person name="Quinquis B."/>
            <person name="Renault P."/>
            <person name="Sorokin A."/>
            <person name="Ehrlich S.D."/>
            <person name="Kulakauskas S."/>
            <person name="Lapidus A."/>
            <person name="Goltsman E."/>
            <person name="Mazur M."/>
            <person name="Pusch G.D."/>
            <person name="Fonstein M."/>
            <person name="Overbeek R."/>
            <person name="Kyprides N."/>
            <person name="Purnelle B."/>
            <person name="Prozzi D."/>
            <person name="Ngui K."/>
            <person name="Masuy D."/>
            <person name="Hancy F."/>
            <person name="Burteau S."/>
            <person name="Boutry M."/>
            <person name="Delcour J."/>
            <person name="Goffeau A."/>
            <person name="Hols P."/>
        </authorList>
    </citation>
    <scope>NUCLEOTIDE SEQUENCE [LARGE SCALE GENOMIC DNA]</scope>
    <source>
        <strain>ATCC BAA-250 / LMG 18311</strain>
    </source>
</reference>
<keyword id="KW-0067">ATP-binding</keyword>
<keyword id="KW-0963">Cytoplasm</keyword>
<keyword id="KW-0275">Fatty acid biosynthesis</keyword>
<keyword id="KW-0276">Fatty acid metabolism</keyword>
<keyword id="KW-0444">Lipid biosynthesis</keyword>
<keyword id="KW-0443">Lipid metabolism</keyword>
<keyword id="KW-0479">Metal-binding</keyword>
<keyword id="KW-0547">Nucleotide-binding</keyword>
<keyword id="KW-1185">Reference proteome</keyword>
<keyword id="KW-0808">Transferase</keyword>
<keyword id="KW-0862">Zinc</keyword>
<keyword id="KW-0863">Zinc-finger</keyword>
<organism>
    <name type="scientific">Streptococcus thermophilus (strain ATCC BAA-250 / LMG 18311)</name>
    <dbReference type="NCBI Taxonomy" id="264199"/>
    <lineage>
        <taxon>Bacteria</taxon>
        <taxon>Bacillati</taxon>
        <taxon>Bacillota</taxon>
        <taxon>Bacilli</taxon>
        <taxon>Lactobacillales</taxon>
        <taxon>Streptococcaceae</taxon>
        <taxon>Streptococcus</taxon>
    </lineage>
</organism>
<gene>
    <name evidence="1" type="primary">accD</name>
    <name type="ordered locus">stu0392</name>
</gene>
<proteinExistence type="inferred from homology"/>
<name>ACCD_STRT2</name>
<feature type="chain" id="PRO_0000389889" description="Acetyl-coenzyme A carboxylase carboxyl transferase subunit beta">
    <location>
        <begin position="1"/>
        <end position="288"/>
    </location>
</feature>
<feature type="domain" description="CoA carboxyltransferase N-terminal" evidence="2">
    <location>
        <begin position="34"/>
        <end position="288"/>
    </location>
</feature>
<feature type="zinc finger region" description="C4-type" evidence="1">
    <location>
        <begin position="38"/>
        <end position="59"/>
    </location>
</feature>
<feature type="binding site" evidence="1">
    <location>
        <position position="38"/>
    </location>
    <ligand>
        <name>Zn(2+)</name>
        <dbReference type="ChEBI" id="CHEBI:29105"/>
    </ligand>
</feature>
<feature type="binding site" evidence="1">
    <location>
        <position position="41"/>
    </location>
    <ligand>
        <name>Zn(2+)</name>
        <dbReference type="ChEBI" id="CHEBI:29105"/>
    </ligand>
</feature>
<feature type="binding site" evidence="1">
    <location>
        <position position="56"/>
    </location>
    <ligand>
        <name>Zn(2+)</name>
        <dbReference type="ChEBI" id="CHEBI:29105"/>
    </ligand>
</feature>
<feature type="binding site" evidence="1">
    <location>
        <position position="59"/>
    </location>
    <ligand>
        <name>Zn(2+)</name>
        <dbReference type="ChEBI" id="CHEBI:29105"/>
    </ligand>
</feature>
<dbReference type="EC" id="2.1.3.15" evidence="1"/>
<dbReference type="EMBL" id="CP000023">
    <property type="protein sequence ID" value="AAV60110.1"/>
    <property type="molecule type" value="Genomic_DNA"/>
</dbReference>
<dbReference type="RefSeq" id="WP_002946040.1">
    <property type="nucleotide sequence ID" value="NC_006448.1"/>
</dbReference>
<dbReference type="SMR" id="Q5M5R2"/>
<dbReference type="STRING" id="264199.stu0392"/>
<dbReference type="GeneID" id="66898316"/>
<dbReference type="KEGG" id="stl:stu0392"/>
<dbReference type="eggNOG" id="COG0777">
    <property type="taxonomic scope" value="Bacteria"/>
</dbReference>
<dbReference type="HOGENOM" id="CLU_015486_1_1_9"/>
<dbReference type="UniPathway" id="UPA00655">
    <property type="reaction ID" value="UER00711"/>
</dbReference>
<dbReference type="Proteomes" id="UP000001170">
    <property type="component" value="Chromosome"/>
</dbReference>
<dbReference type="GO" id="GO:0009317">
    <property type="term" value="C:acetyl-CoA carboxylase complex"/>
    <property type="evidence" value="ECO:0007669"/>
    <property type="project" value="InterPro"/>
</dbReference>
<dbReference type="GO" id="GO:0003989">
    <property type="term" value="F:acetyl-CoA carboxylase activity"/>
    <property type="evidence" value="ECO:0007669"/>
    <property type="project" value="InterPro"/>
</dbReference>
<dbReference type="GO" id="GO:0005524">
    <property type="term" value="F:ATP binding"/>
    <property type="evidence" value="ECO:0007669"/>
    <property type="project" value="UniProtKB-KW"/>
</dbReference>
<dbReference type="GO" id="GO:0016743">
    <property type="term" value="F:carboxyl- or carbamoyltransferase activity"/>
    <property type="evidence" value="ECO:0007669"/>
    <property type="project" value="UniProtKB-UniRule"/>
</dbReference>
<dbReference type="GO" id="GO:0008270">
    <property type="term" value="F:zinc ion binding"/>
    <property type="evidence" value="ECO:0007669"/>
    <property type="project" value="UniProtKB-UniRule"/>
</dbReference>
<dbReference type="GO" id="GO:0006633">
    <property type="term" value="P:fatty acid biosynthetic process"/>
    <property type="evidence" value="ECO:0007669"/>
    <property type="project" value="UniProtKB-KW"/>
</dbReference>
<dbReference type="GO" id="GO:2001295">
    <property type="term" value="P:malonyl-CoA biosynthetic process"/>
    <property type="evidence" value="ECO:0007669"/>
    <property type="project" value="UniProtKB-UniRule"/>
</dbReference>
<dbReference type="Gene3D" id="3.90.226.10">
    <property type="entry name" value="2-enoyl-CoA Hydratase, Chain A, domain 1"/>
    <property type="match status" value="1"/>
</dbReference>
<dbReference type="HAMAP" id="MF_01395">
    <property type="entry name" value="AcetylCoA_CT_beta"/>
    <property type="match status" value="1"/>
</dbReference>
<dbReference type="InterPro" id="IPR034733">
    <property type="entry name" value="AcCoA_carboxyl_beta"/>
</dbReference>
<dbReference type="InterPro" id="IPR000438">
    <property type="entry name" value="Acetyl_CoA_COase_Trfase_b_su"/>
</dbReference>
<dbReference type="InterPro" id="IPR029045">
    <property type="entry name" value="ClpP/crotonase-like_dom_sf"/>
</dbReference>
<dbReference type="InterPro" id="IPR011762">
    <property type="entry name" value="COA_CT_N"/>
</dbReference>
<dbReference type="InterPro" id="IPR041010">
    <property type="entry name" value="Znf-ACC"/>
</dbReference>
<dbReference type="NCBIfam" id="TIGR00515">
    <property type="entry name" value="accD"/>
    <property type="match status" value="1"/>
</dbReference>
<dbReference type="PANTHER" id="PTHR42995">
    <property type="entry name" value="ACETYL-COENZYME A CARBOXYLASE CARBOXYL TRANSFERASE SUBUNIT BETA, CHLOROPLASTIC"/>
    <property type="match status" value="1"/>
</dbReference>
<dbReference type="PANTHER" id="PTHR42995:SF5">
    <property type="entry name" value="ACETYL-COENZYME A CARBOXYLASE CARBOXYL TRANSFERASE SUBUNIT BETA, CHLOROPLASTIC"/>
    <property type="match status" value="1"/>
</dbReference>
<dbReference type="Pfam" id="PF01039">
    <property type="entry name" value="Carboxyl_trans"/>
    <property type="match status" value="1"/>
</dbReference>
<dbReference type="Pfam" id="PF17848">
    <property type="entry name" value="Zn_ribbon_ACC"/>
    <property type="match status" value="1"/>
</dbReference>
<dbReference type="PRINTS" id="PR01070">
    <property type="entry name" value="ACCCTRFRASEB"/>
</dbReference>
<dbReference type="SUPFAM" id="SSF52096">
    <property type="entry name" value="ClpP/crotonase"/>
    <property type="match status" value="1"/>
</dbReference>
<dbReference type="PROSITE" id="PS50980">
    <property type="entry name" value="COA_CT_NTER"/>
    <property type="match status" value="1"/>
</dbReference>